<name>MNTH_VIBC1</name>
<accession>A7N307</accession>
<organism>
    <name type="scientific">Vibrio campbellii (strain ATCC BAA-1116)</name>
    <dbReference type="NCBI Taxonomy" id="2902295"/>
    <lineage>
        <taxon>Bacteria</taxon>
        <taxon>Pseudomonadati</taxon>
        <taxon>Pseudomonadota</taxon>
        <taxon>Gammaproteobacteria</taxon>
        <taxon>Vibrionales</taxon>
        <taxon>Vibrionaceae</taxon>
        <taxon>Vibrio</taxon>
    </lineage>
</organism>
<comment type="function">
    <text evidence="1">H(+)-stimulated, divalent metal cation uptake system.</text>
</comment>
<comment type="subcellular location">
    <subcellularLocation>
        <location evidence="1">Cell inner membrane</location>
        <topology evidence="1">Multi-pass membrane protein</topology>
    </subcellularLocation>
</comment>
<comment type="similarity">
    <text evidence="1">Belongs to the NRAMP family.</text>
</comment>
<dbReference type="EMBL" id="CP000790">
    <property type="protein sequence ID" value="ABU72805.1"/>
    <property type="molecule type" value="Genomic_DNA"/>
</dbReference>
<dbReference type="RefSeq" id="WP_011999195.1">
    <property type="nucleotide sequence ID" value="NC_009784.1"/>
</dbReference>
<dbReference type="SMR" id="A7N307"/>
<dbReference type="KEGG" id="vha:VIBHAR_04897"/>
<dbReference type="PATRIC" id="fig|338187.25.peg.5296"/>
<dbReference type="Proteomes" id="UP000008152">
    <property type="component" value="Chromosome II"/>
</dbReference>
<dbReference type="GO" id="GO:0005886">
    <property type="term" value="C:plasma membrane"/>
    <property type="evidence" value="ECO:0007669"/>
    <property type="project" value="UniProtKB-SubCell"/>
</dbReference>
<dbReference type="GO" id="GO:0015086">
    <property type="term" value="F:cadmium ion transmembrane transporter activity"/>
    <property type="evidence" value="ECO:0007669"/>
    <property type="project" value="TreeGrafter"/>
</dbReference>
<dbReference type="GO" id="GO:0005384">
    <property type="term" value="F:manganese ion transmembrane transporter activity"/>
    <property type="evidence" value="ECO:0007669"/>
    <property type="project" value="TreeGrafter"/>
</dbReference>
<dbReference type="GO" id="GO:0046872">
    <property type="term" value="F:metal ion binding"/>
    <property type="evidence" value="ECO:0007669"/>
    <property type="project" value="UniProtKB-UniRule"/>
</dbReference>
<dbReference type="GO" id="GO:0015293">
    <property type="term" value="F:symporter activity"/>
    <property type="evidence" value="ECO:0007669"/>
    <property type="project" value="UniProtKB-UniRule"/>
</dbReference>
<dbReference type="GO" id="GO:0034755">
    <property type="term" value="P:iron ion transmembrane transport"/>
    <property type="evidence" value="ECO:0007669"/>
    <property type="project" value="TreeGrafter"/>
</dbReference>
<dbReference type="HAMAP" id="MF_00221">
    <property type="entry name" value="NRAMP"/>
    <property type="match status" value="1"/>
</dbReference>
<dbReference type="InterPro" id="IPR001046">
    <property type="entry name" value="NRAMP_fam"/>
</dbReference>
<dbReference type="NCBIfam" id="TIGR01197">
    <property type="entry name" value="nramp"/>
    <property type="match status" value="1"/>
</dbReference>
<dbReference type="NCBIfam" id="NF037982">
    <property type="entry name" value="Nramp_1"/>
    <property type="match status" value="1"/>
</dbReference>
<dbReference type="NCBIfam" id="NF001923">
    <property type="entry name" value="PRK00701.1"/>
    <property type="match status" value="1"/>
</dbReference>
<dbReference type="PANTHER" id="PTHR11706:SF33">
    <property type="entry name" value="NATURAL RESISTANCE-ASSOCIATED MACROPHAGE PROTEIN 2"/>
    <property type="match status" value="1"/>
</dbReference>
<dbReference type="PANTHER" id="PTHR11706">
    <property type="entry name" value="SOLUTE CARRIER PROTEIN FAMILY 11 MEMBER"/>
    <property type="match status" value="1"/>
</dbReference>
<dbReference type="Pfam" id="PF01566">
    <property type="entry name" value="Nramp"/>
    <property type="match status" value="1"/>
</dbReference>
<dbReference type="PRINTS" id="PR00447">
    <property type="entry name" value="NATRESASSCMP"/>
</dbReference>
<gene>
    <name evidence="1" type="primary">mntH</name>
    <name type="ordered locus">VIBHAR_04897</name>
</gene>
<evidence type="ECO:0000255" key="1">
    <source>
        <dbReference type="HAMAP-Rule" id="MF_00221"/>
    </source>
</evidence>
<keyword id="KW-0997">Cell inner membrane</keyword>
<keyword id="KW-1003">Cell membrane</keyword>
<keyword id="KW-0406">Ion transport</keyword>
<keyword id="KW-0472">Membrane</keyword>
<keyword id="KW-0769">Symport</keyword>
<keyword id="KW-0812">Transmembrane</keyword>
<keyword id="KW-1133">Transmembrane helix</keyword>
<keyword id="KW-0813">Transport</keyword>
<proteinExistence type="inferred from homology"/>
<protein>
    <recommendedName>
        <fullName evidence="1">Divalent metal cation transporter MntH</fullName>
    </recommendedName>
</protein>
<reference key="1">
    <citation type="submission" date="2007-08" db="EMBL/GenBank/DDBJ databases">
        <authorList>
            <consortium name="The Vibrio harveyi Genome Sequencing Project"/>
            <person name="Bassler B."/>
            <person name="Clifton S.W."/>
            <person name="Fulton L."/>
            <person name="Delehaunty K."/>
            <person name="Fronick C."/>
            <person name="Harrison M."/>
            <person name="Markivic C."/>
            <person name="Fulton R."/>
            <person name="Tin-Wollam A.-M."/>
            <person name="Shah N."/>
            <person name="Pepin K."/>
            <person name="Nash W."/>
            <person name="Thiruvilangam P."/>
            <person name="Bhonagiri V."/>
            <person name="Waters C."/>
            <person name="Tu K.C."/>
            <person name="Irgon J."/>
            <person name="Wilson R.K."/>
        </authorList>
    </citation>
    <scope>NUCLEOTIDE SEQUENCE [LARGE SCALE GENOMIC DNA]</scope>
    <source>
        <strain>ATCC BAA-1116 / BB120</strain>
    </source>
</reference>
<feature type="chain" id="PRO_0000325612" description="Divalent metal cation transporter MntH">
    <location>
        <begin position="1"/>
        <end position="423"/>
    </location>
</feature>
<feature type="transmembrane region" description="Helical" evidence="1">
    <location>
        <begin position="31"/>
        <end position="51"/>
    </location>
</feature>
<feature type="transmembrane region" description="Helical" evidence="1">
    <location>
        <begin position="58"/>
        <end position="78"/>
    </location>
</feature>
<feature type="transmembrane region" description="Helical" evidence="1">
    <location>
        <begin position="116"/>
        <end position="136"/>
    </location>
</feature>
<feature type="transmembrane region" description="Helical" evidence="1">
    <location>
        <begin position="137"/>
        <end position="157"/>
    </location>
</feature>
<feature type="transmembrane region" description="Helical" evidence="1">
    <location>
        <begin position="168"/>
        <end position="188"/>
    </location>
</feature>
<feature type="transmembrane region" description="Helical" evidence="1">
    <location>
        <begin position="213"/>
        <end position="233"/>
    </location>
</feature>
<feature type="transmembrane region" description="Helical" evidence="1">
    <location>
        <begin position="254"/>
        <end position="274"/>
    </location>
</feature>
<feature type="transmembrane region" description="Helical" evidence="1">
    <location>
        <begin position="302"/>
        <end position="322"/>
    </location>
</feature>
<feature type="transmembrane region" description="Helical" evidence="1">
    <location>
        <begin position="342"/>
        <end position="362"/>
    </location>
</feature>
<feature type="transmembrane region" description="Helical" evidence="1">
    <location>
        <begin position="363"/>
        <end position="383"/>
    </location>
</feature>
<feature type="transmembrane region" description="Helical" evidence="1">
    <location>
        <begin position="401"/>
        <end position="421"/>
    </location>
</feature>
<sequence length="423" mass="45555">MSNASINHASIQLENAAVSNVSAFNKTKRKLMMLGPAFIAAIGYIDPGNFATNIESGSSFGYQLLWVVLWANLMAMLIQYLSAKLGIVTGKNLAEHLRDHLPNKWAVGFYWIQAEIIAIATDLAEFIGAAVGFQLVFGISLMEGAMITAVATVMILILNQKGQKPLEVVIGSLLMLVAVIYIAELFFAHPAGGEMVKGLLTPTFTDSHQIYLAAGILGATVMPHVIYLHSALFKNSYGESTKTRLRTTRFDVLIAMVIAGFVNIAIVAMAAAVFHYSGNQHVAEIETAYMTLTPLVGKAASVLFGVSLIASGLSSTVVGTMAGQVVMQGFVRFSIPMWVRRFITMAPSFVVIGLGMNTTDILVMSQVVLSFGIALAIIPLLIFTNSERLMGEFKNNKWVSYAGVVIVSLVLSLNAYLMVTLTA</sequence>